<accession>A4XC73</accession>
<proteinExistence type="inferred from homology"/>
<name>GSA_SALTO</name>
<sequence>MTDVFPAGPGRYPAAAPASEALFDRACAIVPGGVNSPVRAFRAVGGTPRFIVRGEGPWLYDADGRRYVDLVCSWGPMILGHAHPAVVEALRSAAALGTSFGAPTPGEVELAAEIVDRAPVEQVRLVNSGTEATMSAIRLARGYTGRTRIIKFAGCYHGHSDALLAAAGSGVATLGLPDSPGVTGAAAGDTIVLPYNDLAAVEAVFAAEGPQIAAVITESAAGNMGVVAPRDNFNQRLAAVAHANGALLIVDEVMTGFRVSRAGWHGLDPCAADLWTYGKVMGGGLPAAAFGGRAEIMSQLAPVGPVYQAGTLSGNPLACAAGLATLRLADDALYRRLDETAAVVGRLAGEALAAAGVPHRLSSAGNMFSVFFTDADVFDYATASAQQVPAFKAFFHAMLAAGVYLPPSAFESWFVSAAIDDAALEQIAAALPAAAAAAAEVHGGSDGE</sequence>
<evidence type="ECO:0000255" key="1">
    <source>
        <dbReference type="HAMAP-Rule" id="MF_00375"/>
    </source>
</evidence>
<feature type="chain" id="PRO_0000382367" description="Glutamate-1-semialdehyde 2,1-aminomutase">
    <location>
        <begin position="1"/>
        <end position="448"/>
    </location>
</feature>
<feature type="modified residue" description="N6-(pyridoxal phosphate)lysine" evidence="1">
    <location>
        <position position="279"/>
    </location>
</feature>
<protein>
    <recommendedName>
        <fullName evidence="1">Glutamate-1-semialdehyde 2,1-aminomutase</fullName>
        <shortName evidence="1">GSA</shortName>
        <ecNumber evidence="1">5.4.3.8</ecNumber>
    </recommendedName>
    <alternativeName>
        <fullName evidence="1">Glutamate-1-semialdehyde aminotransferase</fullName>
        <shortName evidence="1">GSA-AT</shortName>
    </alternativeName>
</protein>
<comment type="catalytic activity">
    <reaction evidence="1">
        <text>(S)-4-amino-5-oxopentanoate = 5-aminolevulinate</text>
        <dbReference type="Rhea" id="RHEA:14265"/>
        <dbReference type="ChEBI" id="CHEBI:57501"/>
        <dbReference type="ChEBI" id="CHEBI:356416"/>
        <dbReference type="EC" id="5.4.3.8"/>
    </reaction>
</comment>
<comment type="cofactor">
    <cofactor evidence="1">
        <name>pyridoxal 5'-phosphate</name>
        <dbReference type="ChEBI" id="CHEBI:597326"/>
    </cofactor>
</comment>
<comment type="pathway">
    <text evidence="1">Porphyrin-containing compound metabolism; protoporphyrin-IX biosynthesis; 5-aminolevulinate from L-glutamyl-tRNA(Glu): step 2/2.</text>
</comment>
<comment type="subunit">
    <text evidence="1">Homodimer.</text>
</comment>
<comment type="subcellular location">
    <subcellularLocation>
        <location evidence="1">Cytoplasm</location>
    </subcellularLocation>
</comment>
<comment type="similarity">
    <text evidence="1">Belongs to the class-III pyridoxal-phosphate-dependent aminotransferase family. HemL subfamily.</text>
</comment>
<dbReference type="EC" id="5.4.3.8" evidence="1"/>
<dbReference type="EMBL" id="CP000667">
    <property type="protein sequence ID" value="ABP56530.1"/>
    <property type="molecule type" value="Genomic_DNA"/>
</dbReference>
<dbReference type="RefSeq" id="WP_012015298.1">
    <property type="nucleotide sequence ID" value="NC_009380.1"/>
</dbReference>
<dbReference type="SMR" id="A4XC73"/>
<dbReference type="STRING" id="369723.Strop_4100"/>
<dbReference type="KEGG" id="stp:Strop_4100"/>
<dbReference type="PATRIC" id="fig|369723.5.peg.4239"/>
<dbReference type="eggNOG" id="COG0001">
    <property type="taxonomic scope" value="Bacteria"/>
</dbReference>
<dbReference type="HOGENOM" id="CLU_016922_1_5_11"/>
<dbReference type="UniPathway" id="UPA00251">
    <property type="reaction ID" value="UER00317"/>
</dbReference>
<dbReference type="Proteomes" id="UP000000235">
    <property type="component" value="Chromosome"/>
</dbReference>
<dbReference type="GO" id="GO:0005737">
    <property type="term" value="C:cytoplasm"/>
    <property type="evidence" value="ECO:0007669"/>
    <property type="project" value="UniProtKB-SubCell"/>
</dbReference>
<dbReference type="GO" id="GO:0042286">
    <property type="term" value="F:glutamate-1-semialdehyde 2,1-aminomutase activity"/>
    <property type="evidence" value="ECO:0007669"/>
    <property type="project" value="UniProtKB-UniRule"/>
</dbReference>
<dbReference type="GO" id="GO:0030170">
    <property type="term" value="F:pyridoxal phosphate binding"/>
    <property type="evidence" value="ECO:0007669"/>
    <property type="project" value="InterPro"/>
</dbReference>
<dbReference type="GO" id="GO:0008483">
    <property type="term" value="F:transaminase activity"/>
    <property type="evidence" value="ECO:0007669"/>
    <property type="project" value="InterPro"/>
</dbReference>
<dbReference type="GO" id="GO:0006782">
    <property type="term" value="P:protoporphyrinogen IX biosynthetic process"/>
    <property type="evidence" value="ECO:0007669"/>
    <property type="project" value="UniProtKB-UniRule"/>
</dbReference>
<dbReference type="CDD" id="cd00610">
    <property type="entry name" value="OAT_like"/>
    <property type="match status" value="1"/>
</dbReference>
<dbReference type="FunFam" id="3.40.640.10:FF:000021">
    <property type="entry name" value="Glutamate-1-semialdehyde 2,1-aminomutase"/>
    <property type="match status" value="1"/>
</dbReference>
<dbReference type="Gene3D" id="3.90.1150.10">
    <property type="entry name" value="Aspartate Aminotransferase, domain 1"/>
    <property type="match status" value="1"/>
</dbReference>
<dbReference type="Gene3D" id="3.40.640.10">
    <property type="entry name" value="Type I PLP-dependent aspartate aminotransferase-like (Major domain)"/>
    <property type="match status" value="1"/>
</dbReference>
<dbReference type="HAMAP" id="MF_00375">
    <property type="entry name" value="HemL_aminotrans_3"/>
    <property type="match status" value="1"/>
</dbReference>
<dbReference type="InterPro" id="IPR004639">
    <property type="entry name" value="4pyrrol_synth_GluAld_NH2Trfase"/>
</dbReference>
<dbReference type="InterPro" id="IPR005814">
    <property type="entry name" value="Aminotrans_3"/>
</dbReference>
<dbReference type="InterPro" id="IPR015424">
    <property type="entry name" value="PyrdxlP-dep_Trfase"/>
</dbReference>
<dbReference type="InterPro" id="IPR015421">
    <property type="entry name" value="PyrdxlP-dep_Trfase_major"/>
</dbReference>
<dbReference type="InterPro" id="IPR015422">
    <property type="entry name" value="PyrdxlP-dep_Trfase_small"/>
</dbReference>
<dbReference type="NCBIfam" id="TIGR00713">
    <property type="entry name" value="hemL"/>
    <property type="match status" value="1"/>
</dbReference>
<dbReference type="NCBIfam" id="NF000818">
    <property type="entry name" value="PRK00062.1"/>
    <property type="match status" value="1"/>
</dbReference>
<dbReference type="PANTHER" id="PTHR43713">
    <property type="entry name" value="GLUTAMATE-1-SEMIALDEHYDE 2,1-AMINOMUTASE"/>
    <property type="match status" value="1"/>
</dbReference>
<dbReference type="PANTHER" id="PTHR43713:SF3">
    <property type="entry name" value="GLUTAMATE-1-SEMIALDEHYDE 2,1-AMINOMUTASE 1, CHLOROPLASTIC-RELATED"/>
    <property type="match status" value="1"/>
</dbReference>
<dbReference type="Pfam" id="PF00202">
    <property type="entry name" value="Aminotran_3"/>
    <property type="match status" value="1"/>
</dbReference>
<dbReference type="SUPFAM" id="SSF53383">
    <property type="entry name" value="PLP-dependent transferases"/>
    <property type="match status" value="1"/>
</dbReference>
<keyword id="KW-0963">Cytoplasm</keyword>
<keyword id="KW-0413">Isomerase</keyword>
<keyword id="KW-0627">Porphyrin biosynthesis</keyword>
<keyword id="KW-0663">Pyridoxal phosphate</keyword>
<keyword id="KW-1185">Reference proteome</keyword>
<gene>
    <name evidence="1" type="primary">hemL</name>
    <name type="ordered locus">Strop_4100</name>
</gene>
<reference key="1">
    <citation type="journal article" date="2007" name="Proc. Natl. Acad. Sci. U.S.A.">
        <title>Genome sequencing reveals complex secondary metabolome in the marine actinomycete Salinispora tropica.</title>
        <authorList>
            <person name="Udwary D.W."/>
            <person name="Zeigler L."/>
            <person name="Asolkar R.N."/>
            <person name="Singan V."/>
            <person name="Lapidus A."/>
            <person name="Fenical W."/>
            <person name="Jensen P.R."/>
            <person name="Moore B.S."/>
        </authorList>
    </citation>
    <scope>NUCLEOTIDE SEQUENCE [LARGE SCALE GENOMIC DNA]</scope>
    <source>
        <strain>ATCC BAA-916 / DSM 44818 / JCM 13857 / NBRC 105044 / CNB-440</strain>
    </source>
</reference>
<organism>
    <name type="scientific">Salinispora tropica (strain ATCC BAA-916 / DSM 44818 / JCM 13857 / NBRC 105044 / CNB-440)</name>
    <dbReference type="NCBI Taxonomy" id="369723"/>
    <lineage>
        <taxon>Bacteria</taxon>
        <taxon>Bacillati</taxon>
        <taxon>Actinomycetota</taxon>
        <taxon>Actinomycetes</taxon>
        <taxon>Micromonosporales</taxon>
        <taxon>Micromonosporaceae</taxon>
        <taxon>Salinispora</taxon>
    </lineage>
</organism>